<comment type="function">
    <text evidence="4 5">Catalyzes the hydrolysis of phosphatidylcholine with phospholipase A1 activity (By similarity). May act as an allergen and induce hemolytic activity (By similarity).</text>
</comment>
<comment type="catalytic activity">
    <reaction evidence="4">
        <text>a 1,2-diacyl-sn-glycero-3-phosphocholine + H2O = a 2-acyl-sn-glycero-3-phosphocholine + a fatty acid + H(+)</text>
        <dbReference type="Rhea" id="RHEA:18689"/>
        <dbReference type="ChEBI" id="CHEBI:15377"/>
        <dbReference type="ChEBI" id="CHEBI:15378"/>
        <dbReference type="ChEBI" id="CHEBI:28868"/>
        <dbReference type="ChEBI" id="CHEBI:57643"/>
        <dbReference type="ChEBI" id="CHEBI:57875"/>
        <dbReference type="EC" id="3.1.1.32"/>
    </reaction>
</comment>
<comment type="subcellular location">
    <subcellularLocation>
        <location evidence="10">Secreted</location>
    </subcellularLocation>
</comment>
<comment type="tissue specificity">
    <text evidence="10">Expressed by the venom gland.</text>
</comment>
<comment type="allergen">
    <text evidence="3">Causes an allergic reaction in human. Binds to IgE.</text>
</comment>
<comment type="similarity">
    <text evidence="9">Belongs to the AB hydrolase superfamily. Lipase family.</text>
</comment>
<name>PA14_POLDO</name>
<accession>Q6Q249</accession>
<feature type="signal peptide" evidence="6">
    <location>
        <begin position="1" status="less than"/>
        <end position="4"/>
    </location>
</feature>
<feature type="propeptide" id="PRO_0000425189" evidence="1">
    <location>
        <begin position="5"/>
        <end position="14"/>
    </location>
</feature>
<feature type="chain" id="PRO_5000093094" description="Phospholipase A1 4">
    <location>
        <begin position="15"/>
        <end position="316"/>
    </location>
</feature>
<feature type="active site" description="Nucleophile" evidence="2">
    <location>
        <position position="153"/>
    </location>
</feature>
<feature type="active site" description="Charge relay system" evidence="7">
    <location>
        <position position="181"/>
    </location>
</feature>
<feature type="active site" description="Charge relay system" evidence="7">
    <location>
        <position position="242"/>
    </location>
</feature>
<feature type="disulfide bond" evidence="2">
    <location>
        <begin position="20"/>
        <end position="103"/>
    </location>
</feature>
<feature type="disulfide bond" evidence="2">
    <location>
        <begin position="192"/>
        <end position="197"/>
    </location>
</feature>
<feature type="disulfide bond" evidence="2">
    <location>
        <begin position="235"/>
        <end position="240"/>
    </location>
</feature>
<feature type="disulfide bond" evidence="2">
    <location>
        <begin position="257"/>
        <end position="284"/>
    </location>
</feature>
<feature type="disulfide bond" evidence="2">
    <location>
        <begin position="258"/>
        <end position="309"/>
    </location>
</feature>
<feature type="disulfide bond" evidence="2">
    <location>
        <begin position="277"/>
        <end position="282"/>
    </location>
</feature>
<feature type="non-terminal residue">
    <location>
        <position position="1"/>
    </location>
</feature>
<reference key="1">
    <citation type="journal article" date="2005" name="Acta Biol. Hung.">
        <title>Isolation, cloning and characterization of Polistes dominulus venom phospholipase A1 and its isoforms.</title>
        <authorList>
            <person name="Moawad T.I."/>
            <person name="Hoffman D.R."/>
            <person name="Zalat S."/>
        </authorList>
    </citation>
    <scope>NUCLEOTIDE SEQUENCE [MRNA]</scope>
    <source>
        <tissue>Venom gland</tissue>
    </source>
</reference>
<evidence type="ECO:0000250" key="1"/>
<evidence type="ECO:0000250" key="2">
    <source>
        <dbReference type="UniProtKB" id="A0A0M3KKW3"/>
    </source>
</evidence>
<evidence type="ECO:0000250" key="3">
    <source>
        <dbReference type="UniProtKB" id="A2VBC4"/>
    </source>
</evidence>
<evidence type="ECO:0000250" key="4">
    <source>
        <dbReference type="UniProtKB" id="P0DMB4"/>
    </source>
</evidence>
<evidence type="ECO:0000250" key="5">
    <source>
        <dbReference type="UniProtKB" id="P0DMB7"/>
    </source>
</evidence>
<evidence type="ECO:0000255" key="6"/>
<evidence type="ECO:0000255" key="7">
    <source>
        <dbReference type="PROSITE-ProRule" id="PRU10037"/>
    </source>
</evidence>
<evidence type="ECO:0000303" key="8">
    <source>
    </source>
</evidence>
<evidence type="ECO:0000305" key="9"/>
<evidence type="ECO:0000305" key="10">
    <source>
    </source>
</evidence>
<proteinExistence type="evidence at transcript level"/>
<dbReference type="EC" id="3.1.1.32" evidence="4"/>
<dbReference type="EMBL" id="AY566649">
    <property type="protein sequence ID" value="AAS67044.1"/>
    <property type="molecule type" value="mRNA"/>
</dbReference>
<dbReference type="SMR" id="Q6Q249"/>
<dbReference type="Allergome" id="3436">
    <property type="allergen name" value="Pol d 1.0104"/>
</dbReference>
<dbReference type="Allergome" id="586">
    <property type="allergen name" value="Pol d 1"/>
</dbReference>
<dbReference type="ESTHER" id="poldo-q6q252">
    <property type="family name" value="Insect_Phospholipase"/>
</dbReference>
<dbReference type="OrthoDB" id="8183961at2759"/>
<dbReference type="Proteomes" id="UP000694924">
    <property type="component" value="Unplaced"/>
</dbReference>
<dbReference type="GO" id="GO:0005615">
    <property type="term" value="C:extracellular space"/>
    <property type="evidence" value="ECO:0007669"/>
    <property type="project" value="TreeGrafter"/>
</dbReference>
<dbReference type="GO" id="GO:0008970">
    <property type="term" value="F:phospholipase A1 activity"/>
    <property type="evidence" value="ECO:0007669"/>
    <property type="project" value="UniProtKB-EC"/>
</dbReference>
<dbReference type="GO" id="GO:0031640">
    <property type="term" value="P:killing of cells of another organism"/>
    <property type="evidence" value="ECO:0007669"/>
    <property type="project" value="UniProtKB-KW"/>
</dbReference>
<dbReference type="GO" id="GO:0016042">
    <property type="term" value="P:lipid catabolic process"/>
    <property type="evidence" value="ECO:0007669"/>
    <property type="project" value="UniProtKB-KW"/>
</dbReference>
<dbReference type="CDD" id="cd00707">
    <property type="entry name" value="Pancreat_lipase_like"/>
    <property type="match status" value="1"/>
</dbReference>
<dbReference type="Gene3D" id="3.40.50.1820">
    <property type="entry name" value="alpha/beta hydrolase"/>
    <property type="match status" value="1"/>
</dbReference>
<dbReference type="InterPro" id="IPR029058">
    <property type="entry name" value="AB_hydrolase_fold"/>
</dbReference>
<dbReference type="InterPro" id="IPR002334">
    <property type="entry name" value="Allerg_PlipaseA1"/>
</dbReference>
<dbReference type="InterPro" id="IPR013818">
    <property type="entry name" value="Lipase"/>
</dbReference>
<dbReference type="InterPro" id="IPR033906">
    <property type="entry name" value="Lipase_N"/>
</dbReference>
<dbReference type="InterPro" id="IPR000734">
    <property type="entry name" value="TAG_lipase"/>
</dbReference>
<dbReference type="PANTHER" id="PTHR11610">
    <property type="entry name" value="LIPASE"/>
    <property type="match status" value="1"/>
</dbReference>
<dbReference type="PANTHER" id="PTHR11610:SF173">
    <property type="entry name" value="LIPASE DOMAIN-CONTAINING PROTEIN-RELATED"/>
    <property type="match status" value="1"/>
</dbReference>
<dbReference type="Pfam" id="PF00151">
    <property type="entry name" value="Lipase"/>
    <property type="match status" value="1"/>
</dbReference>
<dbReference type="PRINTS" id="PR00825">
    <property type="entry name" value="DOLALLERGEN"/>
</dbReference>
<dbReference type="SUPFAM" id="SSF53474">
    <property type="entry name" value="alpha/beta-Hydrolases"/>
    <property type="match status" value="1"/>
</dbReference>
<dbReference type="PROSITE" id="PS00120">
    <property type="entry name" value="LIPASE_SER"/>
    <property type="match status" value="1"/>
</dbReference>
<protein>
    <recommendedName>
        <fullName evidence="8">Phospholipase A1 4</fullName>
        <shortName evidence="9">PLA1 4</shortName>
        <ecNumber evidence="4">3.1.1.32</ecNumber>
    </recommendedName>
    <allergenName evidence="8">Pol d 1</allergenName>
</protein>
<sequence>ADDLTTLRNGTLDRGITPDCTFNEKDIELHVYSRDKRNGIILKKEILKNYDLFQKSQISHQIAILIHGFLSTGNNENFDAMAKALIEIDNFLVISVDWKKGACNAFASTNDVLGYSQAVGNTRHVGKYVADFTKLLVEQYKVPMSNIRLIGHSLGAHTSGFAGKEVQRLKLGKYKEIIGLDPAGPSFLTSKCPDRLCETDAEYVQAIHTSAILGVYYNVGSVDFYVNYGKSQPGCSEPSCSHTKAVKYLTECIKRECCLIGTPWKSYFSTPKSISQCKRDTCVCVGLNAQSYPAKGSFYVPVEKDAPYCHNEGIKL</sequence>
<organism>
    <name type="scientific">Polistes dominula</name>
    <name type="common">European paper wasp</name>
    <name type="synonym">Vespa dominula</name>
    <dbReference type="NCBI Taxonomy" id="743375"/>
    <lineage>
        <taxon>Eukaryota</taxon>
        <taxon>Metazoa</taxon>
        <taxon>Ecdysozoa</taxon>
        <taxon>Arthropoda</taxon>
        <taxon>Hexapoda</taxon>
        <taxon>Insecta</taxon>
        <taxon>Pterygota</taxon>
        <taxon>Neoptera</taxon>
        <taxon>Endopterygota</taxon>
        <taxon>Hymenoptera</taxon>
        <taxon>Apocrita</taxon>
        <taxon>Aculeata</taxon>
        <taxon>Vespoidea</taxon>
        <taxon>Vespidae</taxon>
        <taxon>Polistinae</taxon>
        <taxon>Polistini</taxon>
        <taxon>Polistes</taxon>
    </lineage>
</organism>
<keyword id="KW-0020">Allergen</keyword>
<keyword id="KW-0204">Cytolysis</keyword>
<keyword id="KW-1015">Disulfide bond</keyword>
<keyword id="KW-0354">Hemolysis</keyword>
<keyword id="KW-0378">Hydrolase</keyword>
<keyword id="KW-0442">Lipid degradation</keyword>
<keyword id="KW-0443">Lipid metabolism</keyword>
<keyword id="KW-0964">Secreted</keyword>
<keyword id="KW-0732">Signal</keyword>